<name>CLPX_ACIB3</name>
<keyword id="KW-0067">ATP-binding</keyword>
<keyword id="KW-0143">Chaperone</keyword>
<keyword id="KW-0479">Metal-binding</keyword>
<keyword id="KW-0547">Nucleotide-binding</keyword>
<keyword id="KW-0862">Zinc</keyword>
<dbReference type="EMBL" id="CP001172">
    <property type="protein sequence ID" value="ACJ58993.1"/>
    <property type="molecule type" value="Genomic_DNA"/>
</dbReference>
<dbReference type="RefSeq" id="WP_001289250.1">
    <property type="nucleotide sequence ID" value="NZ_CP001172.1"/>
</dbReference>
<dbReference type="SMR" id="B7H092"/>
<dbReference type="GeneID" id="92892482"/>
<dbReference type="HOGENOM" id="CLU_014218_8_2_6"/>
<dbReference type="Proteomes" id="UP000006924">
    <property type="component" value="Chromosome"/>
</dbReference>
<dbReference type="GO" id="GO:0009376">
    <property type="term" value="C:HslUV protease complex"/>
    <property type="evidence" value="ECO:0007669"/>
    <property type="project" value="TreeGrafter"/>
</dbReference>
<dbReference type="GO" id="GO:0005524">
    <property type="term" value="F:ATP binding"/>
    <property type="evidence" value="ECO:0007669"/>
    <property type="project" value="UniProtKB-UniRule"/>
</dbReference>
<dbReference type="GO" id="GO:0016887">
    <property type="term" value="F:ATP hydrolysis activity"/>
    <property type="evidence" value="ECO:0007669"/>
    <property type="project" value="InterPro"/>
</dbReference>
<dbReference type="GO" id="GO:0140662">
    <property type="term" value="F:ATP-dependent protein folding chaperone"/>
    <property type="evidence" value="ECO:0007669"/>
    <property type="project" value="InterPro"/>
</dbReference>
<dbReference type="GO" id="GO:0046983">
    <property type="term" value="F:protein dimerization activity"/>
    <property type="evidence" value="ECO:0007669"/>
    <property type="project" value="InterPro"/>
</dbReference>
<dbReference type="GO" id="GO:0051082">
    <property type="term" value="F:unfolded protein binding"/>
    <property type="evidence" value="ECO:0007669"/>
    <property type="project" value="UniProtKB-UniRule"/>
</dbReference>
<dbReference type="GO" id="GO:0008270">
    <property type="term" value="F:zinc ion binding"/>
    <property type="evidence" value="ECO:0007669"/>
    <property type="project" value="InterPro"/>
</dbReference>
<dbReference type="GO" id="GO:0051301">
    <property type="term" value="P:cell division"/>
    <property type="evidence" value="ECO:0007669"/>
    <property type="project" value="TreeGrafter"/>
</dbReference>
<dbReference type="GO" id="GO:0051603">
    <property type="term" value="P:proteolysis involved in protein catabolic process"/>
    <property type="evidence" value="ECO:0007669"/>
    <property type="project" value="TreeGrafter"/>
</dbReference>
<dbReference type="CDD" id="cd19497">
    <property type="entry name" value="RecA-like_ClpX"/>
    <property type="match status" value="1"/>
</dbReference>
<dbReference type="FunFam" id="1.10.8.60:FF:000002">
    <property type="entry name" value="ATP-dependent Clp protease ATP-binding subunit ClpX"/>
    <property type="match status" value="1"/>
</dbReference>
<dbReference type="FunFam" id="3.40.50.300:FF:000005">
    <property type="entry name" value="ATP-dependent Clp protease ATP-binding subunit ClpX"/>
    <property type="match status" value="1"/>
</dbReference>
<dbReference type="Gene3D" id="1.10.8.60">
    <property type="match status" value="1"/>
</dbReference>
<dbReference type="Gene3D" id="6.20.220.10">
    <property type="entry name" value="ClpX chaperone, C4-type zinc finger domain"/>
    <property type="match status" value="1"/>
</dbReference>
<dbReference type="Gene3D" id="3.40.50.300">
    <property type="entry name" value="P-loop containing nucleotide triphosphate hydrolases"/>
    <property type="match status" value="1"/>
</dbReference>
<dbReference type="HAMAP" id="MF_00175">
    <property type="entry name" value="ClpX"/>
    <property type="match status" value="1"/>
</dbReference>
<dbReference type="InterPro" id="IPR003593">
    <property type="entry name" value="AAA+_ATPase"/>
</dbReference>
<dbReference type="InterPro" id="IPR050052">
    <property type="entry name" value="ATP-dep_Clp_protease_ClpX"/>
</dbReference>
<dbReference type="InterPro" id="IPR003959">
    <property type="entry name" value="ATPase_AAA_core"/>
</dbReference>
<dbReference type="InterPro" id="IPR019489">
    <property type="entry name" value="Clp_ATPase_C"/>
</dbReference>
<dbReference type="InterPro" id="IPR004487">
    <property type="entry name" value="Clp_protease_ATP-bd_su_ClpX"/>
</dbReference>
<dbReference type="InterPro" id="IPR046425">
    <property type="entry name" value="ClpX_bact"/>
</dbReference>
<dbReference type="InterPro" id="IPR027417">
    <property type="entry name" value="P-loop_NTPase"/>
</dbReference>
<dbReference type="InterPro" id="IPR010603">
    <property type="entry name" value="Znf_CppX_C4"/>
</dbReference>
<dbReference type="InterPro" id="IPR038366">
    <property type="entry name" value="Znf_CppX_C4_sf"/>
</dbReference>
<dbReference type="NCBIfam" id="TIGR00382">
    <property type="entry name" value="clpX"/>
    <property type="match status" value="1"/>
</dbReference>
<dbReference type="NCBIfam" id="NF003745">
    <property type="entry name" value="PRK05342.1"/>
    <property type="match status" value="1"/>
</dbReference>
<dbReference type="PANTHER" id="PTHR48102:SF7">
    <property type="entry name" value="ATP-DEPENDENT CLP PROTEASE ATP-BINDING SUBUNIT CLPX-LIKE, MITOCHONDRIAL"/>
    <property type="match status" value="1"/>
</dbReference>
<dbReference type="PANTHER" id="PTHR48102">
    <property type="entry name" value="ATP-DEPENDENT CLP PROTEASE ATP-BINDING SUBUNIT CLPX-LIKE, MITOCHONDRIAL-RELATED"/>
    <property type="match status" value="1"/>
</dbReference>
<dbReference type="Pfam" id="PF07724">
    <property type="entry name" value="AAA_2"/>
    <property type="match status" value="1"/>
</dbReference>
<dbReference type="Pfam" id="PF10431">
    <property type="entry name" value="ClpB_D2-small"/>
    <property type="match status" value="1"/>
</dbReference>
<dbReference type="Pfam" id="PF06689">
    <property type="entry name" value="zf-C4_ClpX"/>
    <property type="match status" value="1"/>
</dbReference>
<dbReference type="SMART" id="SM00382">
    <property type="entry name" value="AAA"/>
    <property type="match status" value="1"/>
</dbReference>
<dbReference type="SMART" id="SM01086">
    <property type="entry name" value="ClpB_D2-small"/>
    <property type="match status" value="1"/>
</dbReference>
<dbReference type="SMART" id="SM00994">
    <property type="entry name" value="zf-C4_ClpX"/>
    <property type="match status" value="1"/>
</dbReference>
<dbReference type="SUPFAM" id="SSF57716">
    <property type="entry name" value="Glucocorticoid receptor-like (DNA-binding domain)"/>
    <property type="match status" value="1"/>
</dbReference>
<dbReference type="SUPFAM" id="SSF52540">
    <property type="entry name" value="P-loop containing nucleoside triphosphate hydrolases"/>
    <property type="match status" value="1"/>
</dbReference>
<dbReference type="PROSITE" id="PS51902">
    <property type="entry name" value="CLPX_ZB"/>
    <property type="match status" value="1"/>
</dbReference>
<accession>B7H092</accession>
<feature type="chain" id="PRO_1000189675" description="ATP-dependent Clp protease ATP-binding subunit ClpX">
    <location>
        <begin position="1"/>
        <end position="437"/>
    </location>
</feature>
<feature type="domain" description="ClpX-type ZB" evidence="2">
    <location>
        <begin position="1"/>
        <end position="52"/>
    </location>
</feature>
<feature type="binding site" evidence="2">
    <location>
        <position position="11"/>
    </location>
    <ligand>
        <name>Zn(2+)</name>
        <dbReference type="ChEBI" id="CHEBI:29105"/>
    </ligand>
</feature>
<feature type="binding site" evidence="2">
    <location>
        <position position="14"/>
    </location>
    <ligand>
        <name>Zn(2+)</name>
        <dbReference type="ChEBI" id="CHEBI:29105"/>
    </ligand>
</feature>
<feature type="binding site" evidence="2">
    <location>
        <position position="33"/>
    </location>
    <ligand>
        <name>Zn(2+)</name>
        <dbReference type="ChEBI" id="CHEBI:29105"/>
    </ligand>
</feature>
<feature type="binding site" evidence="2">
    <location>
        <position position="36"/>
    </location>
    <ligand>
        <name>Zn(2+)</name>
        <dbReference type="ChEBI" id="CHEBI:29105"/>
    </ligand>
</feature>
<feature type="binding site" evidence="1">
    <location>
        <begin position="119"/>
        <end position="126"/>
    </location>
    <ligand>
        <name>ATP</name>
        <dbReference type="ChEBI" id="CHEBI:30616"/>
    </ligand>
</feature>
<reference key="1">
    <citation type="journal article" date="2008" name="J. Bacteriol.">
        <title>Comparative genome sequence analysis of multidrug-resistant Acinetobacter baumannii.</title>
        <authorList>
            <person name="Adams M.D."/>
            <person name="Goglin K."/>
            <person name="Molyneaux N."/>
            <person name="Hujer K.M."/>
            <person name="Lavender H."/>
            <person name="Jamison J.J."/>
            <person name="MacDonald I.J."/>
            <person name="Martin K.M."/>
            <person name="Russo T."/>
            <person name="Campagnari A.A."/>
            <person name="Hujer A.M."/>
            <person name="Bonomo R.A."/>
            <person name="Gill S.R."/>
        </authorList>
    </citation>
    <scope>NUCLEOTIDE SEQUENCE [LARGE SCALE GENOMIC DNA]</scope>
    <source>
        <strain>AB307-0294</strain>
    </source>
</reference>
<protein>
    <recommendedName>
        <fullName evidence="1">ATP-dependent Clp protease ATP-binding subunit ClpX</fullName>
    </recommendedName>
</protein>
<evidence type="ECO:0000255" key="1">
    <source>
        <dbReference type="HAMAP-Rule" id="MF_00175"/>
    </source>
</evidence>
<evidence type="ECO:0000255" key="2">
    <source>
        <dbReference type="PROSITE-ProRule" id="PRU01250"/>
    </source>
</evidence>
<organism>
    <name type="scientific">Acinetobacter baumannii (strain AB307-0294)</name>
    <dbReference type="NCBI Taxonomy" id="557600"/>
    <lineage>
        <taxon>Bacteria</taxon>
        <taxon>Pseudomonadati</taxon>
        <taxon>Pseudomonadota</taxon>
        <taxon>Gammaproteobacteria</taxon>
        <taxon>Moraxellales</taxon>
        <taxon>Moraxellaceae</taxon>
        <taxon>Acinetobacter</taxon>
        <taxon>Acinetobacter calcoaceticus/baumannii complex</taxon>
    </lineage>
</organism>
<comment type="function">
    <text evidence="1">ATP-dependent specificity component of the Clp protease. It directs the protease to specific substrates. Can perform chaperone functions in the absence of ClpP.</text>
</comment>
<comment type="subunit">
    <text evidence="1">Component of the ClpX-ClpP complex. Forms a hexameric ring that, in the presence of ATP, binds to fourteen ClpP subunits assembled into a disk-like structure with a central cavity, resembling the structure of eukaryotic proteasomes.</text>
</comment>
<comment type="similarity">
    <text evidence="1">Belongs to the ClpX chaperone family.</text>
</comment>
<sequence length="437" mass="48083">MSEHPQGQKHCSFCGKTQSEVGKLIAGEDAYICNECVDVCLDLVQTSQQVEAGDWASKALPKPHEIRAALDQYVIGQDLAKKTLSVAVYNHYKRLKVGQSGHVSKDVEIAKSNILLIGPTGSGKTLLAQTLARLLDVPFAMADATTLTEAGYVGEDVENIVQKLLQKADYDVEKAQKGIIYIDEIDKITRKSENPSITRDVSGEGVQQALLKMIEGTVASIPPQGGRKHPQQEFIQIDTSNILFICGGAFAGLEKIVQQRQEKGGIGFTADVKNKDETKKLAELFRQVEPTDLVKFGLIPEFIGRLPVIATLEELDEEALMQILTEPKNALTRQYQYLFNMENVDLVFEDSALRAVAKRALERNTGARGLRSILENVLLETMYDLPSRTDVGTVFINEAVINGEAEPVYKSERQPKEAVTHESVAKADLKVIDSKSA</sequence>
<proteinExistence type="inferred from homology"/>
<gene>
    <name evidence="1" type="primary">clpX</name>
    <name type="ordered locus">ABBFA_003056</name>
</gene>